<dbReference type="EMBL" id="U71052">
    <property type="protein sequence ID" value="AAB09595.1"/>
    <property type="molecule type" value="Genomic_DNA"/>
</dbReference>
<dbReference type="SMR" id="P70754"/>
<dbReference type="GO" id="GO:0032300">
    <property type="term" value="C:mismatch repair complex"/>
    <property type="evidence" value="ECO:0007669"/>
    <property type="project" value="InterPro"/>
</dbReference>
<dbReference type="GO" id="GO:0005524">
    <property type="term" value="F:ATP binding"/>
    <property type="evidence" value="ECO:0007669"/>
    <property type="project" value="InterPro"/>
</dbReference>
<dbReference type="GO" id="GO:0016887">
    <property type="term" value="F:ATP hydrolysis activity"/>
    <property type="evidence" value="ECO:0007669"/>
    <property type="project" value="InterPro"/>
</dbReference>
<dbReference type="GO" id="GO:0140664">
    <property type="term" value="F:ATP-dependent DNA damage sensor activity"/>
    <property type="evidence" value="ECO:0007669"/>
    <property type="project" value="InterPro"/>
</dbReference>
<dbReference type="GO" id="GO:0030983">
    <property type="term" value="F:mismatched DNA binding"/>
    <property type="evidence" value="ECO:0007669"/>
    <property type="project" value="InterPro"/>
</dbReference>
<dbReference type="GO" id="GO:0006298">
    <property type="term" value="P:mismatch repair"/>
    <property type="evidence" value="ECO:0007669"/>
    <property type="project" value="UniProtKB-UniRule"/>
</dbReference>
<dbReference type="CDD" id="cd16926">
    <property type="entry name" value="HATPase_MutL-MLH-PMS-like"/>
    <property type="match status" value="1"/>
</dbReference>
<dbReference type="CDD" id="cd00782">
    <property type="entry name" value="MutL_Trans"/>
    <property type="match status" value="1"/>
</dbReference>
<dbReference type="FunFam" id="3.30.565.10:FF:000003">
    <property type="entry name" value="DNA mismatch repair endonuclease MutL"/>
    <property type="match status" value="1"/>
</dbReference>
<dbReference type="Gene3D" id="3.30.230.10">
    <property type="match status" value="1"/>
</dbReference>
<dbReference type="Gene3D" id="3.30.565.10">
    <property type="entry name" value="Histidine kinase-like ATPase, C-terminal domain"/>
    <property type="match status" value="1"/>
</dbReference>
<dbReference type="Gene3D" id="3.30.1540.20">
    <property type="entry name" value="MutL, C-terminal domain, dimerisation subdomain"/>
    <property type="match status" value="1"/>
</dbReference>
<dbReference type="HAMAP" id="MF_00149">
    <property type="entry name" value="DNA_mis_repair"/>
    <property type="match status" value="1"/>
</dbReference>
<dbReference type="InterPro" id="IPR014762">
    <property type="entry name" value="DNA_mismatch_repair_CS"/>
</dbReference>
<dbReference type="InterPro" id="IPR020667">
    <property type="entry name" value="DNA_mismatch_repair_MutL"/>
</dbReference>
<dbReference type="InterPro" id="IPR013507">
    <property type="entry name" value="DNA_mismatch_S5_2-like"/>
</dbReference>
<dbReference type="InterPro" id="IPR036890">
    <property type="entry name" value="HATPase_C_sf"/>
</dbReference>
<dbReference type="InterPro" id="IPR002099">
    <property type="entry name" value="MutL/Mlh/PMS"/>
</dbReference>
<dbReference type="InterPro" id="IPR038973">
    <property type="entry name" value="MutL/Mlh/Pms-like"/>
</dbReference>
<dbReference type="InterPro" id="IPR014790">
    <property type="entry name" value="MutL_C"/>
</dbReference>
<dbReference type="InterPro" id="IPR042120">
    <property type="entry name" value="MutL_C_dimsub"/>
</dbReference>
<dbReference type="InterPro" id="IPR037198">
    <property type="entry name" value="MutL_C_sf"/>
</dbReference>
<dbReference type="InterPro" id="IPR020568">
    <property type="entry name" value="Ribosomal_Su5_D2-typ_SF"/>
</dbReference>
<dbReference type="InterPro" id="IPR014721">
    <property type="entry name" value="Ribsml_uS5_D2-typ_fold_subgr"/>
</dbReference>
<dbReference type="NCBIfam" id="TIGR00585">
    <property type="entry name" value="mutl"/>
    <property type="match status" value="1"/>
</dbReference>
<dbReference type="PANTHER" id="PTHR10073">
    <property type="entry name" value="DNA MISMATCH REPAIR PROTEIN MLH, PMS, MUTL"/>
    <property type="match status" value="1"/>
</dbReference>
<dbReference type="PANTHER" id="PTHR10073:SF12">
    <property type="entry name" value="DNA MISMATCH REPAIR PROTEIN MLH1"/>
    <property type="match status" value="1"/>
</dbReference>
<dbReference type="Pfam" id="PF01119">
    <property type="entry name" value="DNA_mis_repair"/>
    <property type="match status" value="1"/>
</dbReference>
<dbReference type="Pfam" id="PF13589">
    <property type="entry name" value="HATPase_c_3"/>
    <property type="match status" value="1"/>
</dbReference>
<dbReference type="Pfam" id="PF08676">
    <property type="entry name" value="MutL_C"/>
    <property type="match status" value="1"/>
</dbReference>
<dbReference type="SMART" id="SM01340">
    <property type="entry name" value="DNA_mis_repair"/>
    <property type="match status" value="1"/>
</dbReference>
<dbReference type="SUPFAM" id="SSF55874">
    <property type="entry name" value="ATPase domain of HSP90 chaperone/DNA topoisomerase II/histidine kinase"/>
    <property type="match status" value="1"/>
</dbReference>
<dbReference type="SUPFAM" id="SSF118116">
    <property type="entry name" value="DNA mismatch repair protein MutL"/>
    <property type="match status" value="2"/>
</dbReference>
<dbReference type="SUPFAM" id="SSF54211">
    <property type="entry name" value="Ribosomal protein S5 domain 2-like"/>
    <property type="match status" value="1"/>
</dbReference>
<dbReference type="PROSITE" id="PS00058">
    <property type="entry name" value="DNA_MISMATCH_REPAIR_1"/>
    <property type="match status" value="1"/>
</dbReference>
<comment type="function">
    <text evidence="1">This protein is involved in the repair of mismatches in DNA. It is required for dam-dependent methyl-directed DNA mismatch repair. May act as a 'molecular matchmaker', a protein that promotes the formation of a stable complex between two or more DNA-binding proteins in an ATP-dependent manner without itself being part of a final effector complex (By similarity).</text>
</comment>
<comment type="similarity">
    <text evidence="2">Belongs to the DNA mismatch repair MutL/HexB family.</text>
</comment>
<evidence type="ECO:0000250" key="1"/>
<evidence type="ECO:0000305" key="2"/>
<name>MUTL_AQUPY</name>
<accession>P70754</accession>
<feature type="chain" id="PRO_0000177925" description="DNA mismatch repair protein MutL">
    <location>
        <begin position="1"/>
        <end position="426"/>
    </location>
</feature>
<gene>
    <name type="primary">mutL</name>
</gene>
<keyword id="KW-0227">DNA damage</keyword>
<keyword id="KW-0234">DNA repair</keyword>
<proteinExistence type="inferred from homology"/>
<protein>
    <recommendedName>
        <fullName>DNA mismatch repair protein MutL</fullName>
    </recommendedName>
</protein>
<reference key="1">
    <citation type="submission" date="1996-09" db="EMBL/GenBank/DDBJ databases">
        <title>Expression and characterization of MutL proteins from thermophilic eubacteria.</title>
        <authorList>
            <person name="Wetmur J.G."/>
            <person name="Rosenfeld A."/>
            <person name="Wong D.M."/>
        </authorList>
    </citation>
    <scope>NUCLEOTIDE SEQUENCE [GENOMIC DNA]</scope>
</reference>
<organism>
    <name type="scientific">Aquifex pyrophilus</name>
    <dbReference type="NCBI Taxonomy" id="2714"/>
    <lineage>
        <taxon>Bacteria</taxon>
        <taxon>Pseudomonadati</taxon>
        <taxon>Aquificota</taxon>
        <taxon>Aquificia</taxon>
        <taxon>Aquificales</taxon>
        <taxon>Aquificaceae</taxon>
        <taxon>Aquifex</taxon>
    </lineage>
</organism>
<sequence>MFVKILPPEVRRKIAAGEVIDAPVDVVKELIENSLDAKATRIEIEVVKGGKRLIRVKDNGIGIHPEDIEKVVLSGATSKIEKETDLLNVETYGFRGEALYSISSVSKFRLRSRFYQEKEGREIEVEGGTLKSVRRVGMEVGTEVEVYDLFFNLPARKKFLRKEDTERRKITELVKEYAITNPQVDFHLFSEGKETLNLKKKDLKGRIEEIFESIFEEESSEREGIKVRAFISRNQKRGKYYLFVNSRPVYNKNLKEYLKKTFGYKTIVVLFIDIPPFLVDFNVHPKKKEVKFLKERKIYELIRELSSRKHTILEIPTLNQKTESYKPTYEVIGQLNETFILVSDGNFLYFIDQHLLDERINYEKNGNEELACRISVKAGEKLTNEKIKELIKEWKKLENPHVCPHGRPIYYKLPLKEVYEKLGRSF</sequence>